<reference key="1">
    <citation type="submission" date="2006-12" db="EMBL/GenBank/DDBJ databases">
        <title>Complete sequence of Pyrobaculum islandicum DSM 4184.</title>
        <authorList>
            <person name="Copeland A."/>
            <person name="Lucas S."/>
            <person name="Lapidus A."/>
            <person name="Barry K."/>
            <person name="Detter J.C."/>
            <person name="Glavina del Rio T."/>
            <person name="Dalin E."/>
            <person name="Tice H."/>
            <person name="Pitluck S."/>
            <person name="Meincke L."/>
            <person name="Brettin T."/>
            <person name="Bruce D."/>
            <person name="Han C."/>
            <person name="Tapia R."/>
            <person name="Gilna P."/>
            <person name="Schmutz J."/>
            <person name="Larimer F."/>
            <person name="Land M."/>
            <person name="Hauser L."/>
            <person name="Kyrpides N."/>
            <person name="Mikhailova N."/>
            <person name="Cozen A.E."/>
            <person name="Fitz-Gibbon S.T."/>
            <person name="House C.H."/>
            <person name="Saltikov C."/>
            <person name="Lowe T."/>
            <person name="Richardson P."/>
        </authorList>
    </citation>
    <scope>NUCLEOTIDE SEQUENCE [LARGE SCALE GENOMIC DNA]</scope>
    <source>
        <strain>DSM 4184 / JCM 9189 / GEO3</strain>
    </source>
</reference>
<comment type="function">
    <text evidence="1">Catalyzes the conversion of uracil and 5-phospho-alpha-D-ribose 1-diphosphate (PRPP) to UMP and diphosphate.</text>
</comment>
<comment type="catalytic activity">
    <reaction evidence="1">
        <text>UMP + diphosphate = 5-phospho-alpha-D-ribose 1-diphosphate + uracil</text>
        <dbReference type="Rhea" id="RHEA:13017"/>
        <dbReference type="ChEBI" id="CHEBI:17568"/>
        <dbReference type="ChEBI" id="CHEBI:33019"/>
        <dbReference type="ChEBI" id="CHEBI:57865"/>
        <dbReference type="ChEBI" id="CHEBI:58017"/>
        <dbReference type="EC" id="2.4.2.9"/>
    </reaction>
</comment>
<comment type="cofactor">
    <cofactor evidence="1">
        <name>Mg(2+)</name>
        <dbReference type="ChEBI" id="CHEBI:18420"/>
    </cofactor>
    <text evidence="1">Binds 1 Mg(2+) ion per subunit. The magnesium is bound as Mg-PRPP.</text>
</comment>
<comment type="activity regulation">
    <text evidence="1">Allosterically activated by GTP.</text>
</comment>
<comment type="pathway">
    <text evidence="1">Pyrimidine metabolism; UMP biosynthesis via salvage pathway; UMP from uracil: step 1/1.</text>
</comment>
<comment type="similarity">
    <text evidence="1">Belongs to the UPRTase family.</text>
</comment>
<name>UPP_PYRIL</name>
<feature type="chain" id="PRO_1000053771" description="Uracil phosphoribosyltransferase">
    <location>
        <begin position="1"/>
        <end position="211"/>
    </location>
</feature>
<feature type="binding site" evidence="1">
    <location>
        <begin position="30"/>
        <end position="34"/>
    </location>
    <ligand>
        <name>GTP</name>
        <dbReference type="ChEBI" id="CHEBI:37565"/>
    </ligand>
</feature>
<feature type="binding site" evidence="1">
    <location>
        <position position="79"/>
    </location>
    <ligand>
        <name>5-phospho-alpha-D-ribose 1-diphosphate</name>
        <dbReference type="ChEBI" id="CHEBI:58017"/>
    </ligand>
</feature>
<feature type="binding site" evidence="1">
    <location>
        <position position="104"/>
    </location>
    <ligand>
        <name>5-phospho-alpha-D-ribose 1-diphosphate</name>
        <dbReference type="ChEBI" id="CHEBI:58017"/>
    </ligand>
</feature>
<feature type="binding site" evidence="1">
    <location>
        <begin position="133"/>
        <end position="141"/>
    </location>
    <ligand>
        <name>5-phospho-alpha-D-ribose 1-diphosphate</name>
        <dbReference type="ChEBI" id="CHEBI:58017"/>
    </ligand>
</feature>
<feature type="binding site" evidence="1">
    <location>
        <position position="197"/>
    </location>
    <ligand>
        <name>uracil</name>
        <dbReference type="ChEBI" id="CHEBI:17568"/>
    </ligand>
</feature>
<feature type="binding site" evidence="1">
    <location>
        <begin position="202"/>
        <end position="204"/>
    </location>
    <ligand>
        <name>uracil</name>
        <dbReference type="ChEBI" id="CHEBI:17568"/>
    </ligand>
</feature>
<feature type="binding site" evidence="1">
    <location>
        <position position="203"/>
    </location>
    <ligand>
        <name>5-phospho-alpha-D-ribose 1-diphosphate</name>
        <dbReference type="ChEBI" id="CHEBI:58017"/>
    </ligand>
</feature>
<protein>
    <recommendedName>
        <fullName evidence="1">Uracil phosphoribosyltransferase</fullName>
        <ecNumber evidence="1">2.4.2.9</ecNumber>
    </recommendedName>
    <alternativeName>
        <fullName evidence="1">UMP pyrophosphorylase</fullName>
    </alternativeName>
    <alternativeName>
        <fullName evidence="1">UPRTase</fullName>
    </alternativeName>
</protein>
<keyword id="KW-0021">Allosteric enzyme</keyword>
<keyword id="KW-0328">Glycosyltransferase</keyword>
<keyword id="KW-0342">GTP-binding</keyword>
<keyword id="KW-0460">Magnesium</keyword>
<keyword id="KW-0547">Nucleotide-binding</keyword>
<keyword id="KW-0808">Transferase</keyword>
<evidence type="ECO:0000255" key="1">
    <source>
        <dbReference type="HAMAP-Rule" id="MF_01218"/>
    </source>
</evidence>
<sequence>MPVKIIDHVYAQYLLTQLRNRNTKGIDFRKGLVRLGRIVGYELVRYFPTREVEVETPLGKAVGIEILGLDKVIIVQILRAAMPFVEGLLKAFPQARLGVIAARRKEEGGVVDVEVFYSKIPTVEREDIVIVADPMLATGITMTRAIEEVYRVGQPGRLIVVSVIATPVGIERVLSKYPETEIFVVAIDPTLNDKAFIVPGLGDAGDRAFST</sequence>
<gene>
    <name evidence="1" type="primary">upp</name>
    <name type="ordered locus">Pisl_1643</name>
</gene>
<organism>
    <name type="scientific">Pyrobaculum islandicum (strain DSM 4184 / JCM 9189 / GEO3)</name>
    <dbReference type="NCBI Taxonomy" id="384616"/>
    <lineage>
        <taxon>Archaea</taxon>
        <taxon>Thermoproteota</taxon>
        <taxon>Thermoprotei</taxon>
        <taxon>Thermoproteales</taxon>
        <taxon>Thermoproteaceae</taxon>
        <taxon>Pyrobaculum</taxon>
    </lineage>
</organism>
<dbReference type="EC" id="2.4.2.9" evidence="1"/>
<dbReference type="EMBL" id="CP000504">
    <property type="protein sequence ID" value="ABL88795.1"/>
    <property type="molecule type" value="Genomic_DNA"/>
</dbReference>
<dbReference type="RefSeq" id="WP_011763370.1">
    <property type="nucleotide sequence ID" value="NC_008701.1"/>
</dbReference>
<dbReference type="SMR" id="A1RV13"/>
<dbReference type="STRING" id="384616.Pisl_1643"/>
<dbReference type="GeneID" id="4618101"/>
<dbReference type="KEGG" id="pis:Pisl_1643"/>
<dbReference type="eggNOG" id="arCOG04128">
    <property type="taxonomic scope" value="Archaea"/>
</dbReference>
<dbReference type="HOGENOM" id="CLU_067096_2_0_2"/>
<dbReference type="OrthoDB" id="80352at2157"/>
<dbReference type="UniPathway" id="UPA00574">
    <property type="reaction ID" value="UER00636"/>
</dbReference>
<dbReference type="Proteomes" id="UP000002595">
    <property type="component" value="Chromosome"/>
</dbReference>
<dbReference type="GO" id="GO:0005525">
    <property type="term" value="F:GTP binding"/>
    <property type="evidence" value="ECO:0007669"/>
    <property type="project" value="UniProtKB-KW"/>
</dbReference>
<dbReference type="GO" id="GO:0000287">
    <property type="term" value="F:magnesium ion binding"/>
    <property type="evidence" value="ECO:0007669"/>
    <property type="project" value="UniProtKB-UniRule"/>
</dbReference>
<dbReference type="GO" id="GO:0004845">
    <property type="term" value="F:uracil phosphoribosyltransferase activity"/>
    <property type="evidence" value="ECO:0007669"/>
    <property type="project" value="UniProtKB-UniRule"/>
</dbReference>
<dbReference type="GO" id="GO:0044206">
    <property type="term" value="P:UMP salvage"/>
    <property type="evidence" value="ECO:0007669"/>
    <property type="project" value="UniProtKB-UniRule"/>
</dbReference>
<dbReference type="GO" id="GO:0006223">
    <property type="term" value="P:uracil salvage"/>
    <property type="evidence" value="ECO:0007669"/>
    <property type="project" value="InterPro"/>
</dbReference>
<dbReference type="CDD" id="cd06223">
    <property type="entry name" value="PRTases_typeI"/>
    <property type="match status" value="1"/>
</dbReference>
<dbReference type="Gene3D" id="3.40.50.2020">
    <property type="match status" value="1"/>
</dbReference>
<dbReference type="HAMAP" id="MF_01218_A">
    <property type="entry name" value="Upp_A"/>
    <property type="match status" value="1"/>
</dbReference>
<dbReference type="InterPro" id="IPR000836">
    <property type="entry name" value="PRibTrfase_dom"/>
</dbReference>
<dbReference type="InterPro" id="IPR029057">
    <property type="entry name" value="PRTase-like"/>
</dbReference>
<dbReference type="InterPro" id="IPR034331">
    <property type="entry name" value="Upp_A"/>
</dbReference>
<dbReference type="InterPro" id="IPR005765">
    <property type="entry name" value="Ura_phspho_trans"/>
</dbReference>
<dbReference type="NCBIfam" id="NF001097">
    <property type="entry name" value="PRK00129.1"/>
    <property type="match status" value="1"/>
</dbReference>
<dbReference type="NCBIfam" id="TIGR01091">
    <property type="entry name" value="upp"/>
    <property type="match status" value="1"/>
</dbReference>
<dbReference type="Pfam" id="PF14681">
    <property type="entry name" value="UPRTase"/>
    <property type="match status" value="1"/>
</dbReference>
<dbReference type="SUPFAM" id="SSF53271">
    <property type="entry name" value="PRTase-like"/>
    <property type="match status" value="1"/>
</dbReference>
<accession>A1RV13</accession>
<proteinExistence type="inferred from homology"/>